<comment type="function">
    <text evidence="1">Component of the cytosolic iron-sulfur protein assembly (CIA) complex, a multiprotein complex that mediates the incorporation of iron-sulfur cluster into extramitochondrial Fe/S proteins. Seems to negatively regulate the level of HIF1A expression, although this effect could be indirect (By similarity).</text>
</comment>
<comment type="subunit">
    <text evidence="1">External component of the CIA complex. In the CIA complex, interacts directly with CIAO1 and MMS19.</text>
</comment>
<comment type="alternative products">
    <event type="alternative splicing"/>
    <isoform>
        <id>A4FV58-1</id>
        <name>1</name>
        <sequence type="displayed"/>
    </isoform>
    <isoform>
        <id>A4FV58-2</id>
        <name>2</name>
        <sequence type="described" ref="VSP_025692 VSP_025693"/>
    </isoform>
</comment>
<comment type="similarity">
    <text evidence="4">Belongs to the NARF family.</text>
</comment>
<reference key="1">
    <citation type="journal article" date="2009" name="Science">
        <title>The genome sequence of taurine cattle: a window to ruminant biology and evolution.</title>
        <authorList>
            <consortium name="The bovine genome sequencing and analysis consortium"/>
        </authorList>
    </citation>
    <scope>NUCLEOTIDE SEQUENCE [LARGE SCALE GENOMIC DNA]</scope>
    <source>
        <strain>Hereford</strain>
    </source>
</reference>
<reference key="2">
    <citation type="submission" date="2006-09" db="EMBL/GenBank/DDBJ databases">
        <authorList>
            <consortium name="NIH - Mammalian Gene Collection (MGC) project"/>
        </authorList>
    </citation>
    <scope>NUCLEOTIDE SEQUENCE [LARGE SCALE MRNA] (ISOFORM 2)</scope>
    <source>
        <strain>Hereford</strain>
        <tissue>Fetal muscle</tissue>
    </source>
</reference>
<name>CIAO3_BOVIN</name>
<protein>
    <recommendedName>
        <fullName evidence="4">Cytosolic iron-sulfur assembly component 3</fullName>
    </recommendedName>
    <alternativeName>
        <fullName>Cytosolic Fe-S cluster assembly factor NARFL</fullName>
    </alternativeName>
    <alternativeName>
        <fullName>Iron-only hydrogenase-like protein 1</fullName>
        <shortName>IOP1</shortName>
    </alternativeName>
    <alternativeName>
        <fullName>Nuclear prelamin A recognition factor-like protein</fullName>
    </alternativeName>
</protein>
<sequence>MASPFSGALQLTDLDDFIAPSQDCIKPMKVDRRPGSGVAKIHIEDDGSYFQVSQDGGMKKLEKAKISLDDCLACSGCVTSAETVLITQQSHEELRKVLGANKTAAPDQQKLVVISVSPQSRASLAVRFQLNPTDTARKLTAFFKKIGAHYVFDTAFSRNFSLLESQREFVRRFRGQADPEQALPVLTSACPGWICYAEKTHGSTLLPHISTARSPQQVMGSLVKDFFAQQQHLTPDKVYHATVMPCYDKKLEASRPDFFSQEHQTRDVDCVITTGEVFKLLEEEGVSLSELEPAPLDSLCSSASAQEPTSHQGGGSGGYLEHVFRHAAQELFGIHVTEVTYRPLRNKDLQEVILEREGQVLLHFAAAYGFRNIQNLVQKLKRGRCPYHYVEVMACPAGCLNGGGQLKAPDMPGKELLQQVERLYGLVRTEAPEDAPGIQELYERWLQGAGSERAGRLLHTSYHAVEKAGSGLSIRW</sequence>
<proteinExistence type="evidence at transcript level"/>
<organism>
    <name type="scientific">Bos taurus</name>
    <name type="common">Bovine</name>
    <dbReference type="NCBI Taxonomy" id="9913"/>
    <lineage>
        <taxon>Eukaryota</taxon>
        <taxon>Metazoa</taxon>
        <taxon>Chordata</taxon>
        <taxon>Craniata</taxon>
        <taxon>Vertebrata</taxon>
        <taxon>Euteleostomi</taxon>
        <taxon>Mammalia</taxon>
        <taxon>Eutheria</taxon>
        <taxon>Laurasiatheria</taxon>
        <taxon>Artiodactyla</taxon>
        <taxon>Ruminantia</taxon>
        <taxon>Pecora</taxon>
        <taxon>Bovidae</taxon>
        <taxon>Bovinae</taxon>
        <taxon>Bos</taxon>
    </lineage>
</organism>
<gene>
    <name evidence="1" type="primary">CIAO3</name>
    <name evidence="1" type="synonym">NARFL</name>
</gene>
<feature type="initiator methionine" description="Removed" evidence="1">
    <location>
        <position position="1"/>
    </location>
</feature>
<feature type="chain" id="PRO_0000288484" description="Cytosolic iron-sulfur assembly component 3">
    <location>
        <begin position="2"/>
        <end position="476"/>
    </location>
</feature>
<feature type="binding site" evidence="2">
    <location>
        <position position="24"/>
    </location>
    <ligand>
        <name>[4Fe-4S] cluster</name>
        <dbReference type="ChEBI" id="CHEBI:49883"/>
        <label>1</label>
    </ligand>
</feature>
<feature type="binding site" evidence="2">
    <location>
        <position position="71"/>
    </location>
    <ligand>
        <name>[4Fe-4S] cluster</name>
        <dbReference type="ChEBI" id="CHEBI:49883"/>
        <label>1</label>
    </ligand>
</feature>
<feature type="binding site" evidence="2">
    <location>
        <position position="74"/>
    </location>
    <ligand>
        <name>[4Fe-4S] cluster</name>
        <dbReference type="ChEBI" id="CHEBI:49883"/>
        <label>1</label>
    </ligand>
</feature>
<feature type="binding site" evidence="2">
    <location>
        <position position="77"/>
    </location>
    <ligand>
        <name>[4Fe-4S] cluster</name>
        <dbReference type="ChEBI" id="CHEBI:49883"/>
        <label>1</label>
    </ligand>
</feature>
<feature type="binding site" evidence="2">
    <location>
        <position position="190"/>
    </location>
    <ligand>
        <name>[4Fe-4S] cluster</name>
        <dbReference type="ChEBI" id="CHEBI:49883"/>
        <label>2</label>
    </ligand>
</feature>
<feature type="binding site" evidence="2">
    <location>
        <position position="246"/>
    </location>
    <ligand>
        <name>[4Fe-4S] cluster</name>
        <dbReference type="ChEBI" id="CHEBI:49883"/>
        <label>2</label>
    </ligand>
</feature>
<feature type="binding site" evidence="2">
    <location>
        <position position="395"/>
    </location>
    <ligand>
        <name>[4Fe-4S] cluster</name>
        <dbReference type="ChEBI" id="CHEBI:49883"/>
        <label>2</label>
    </ligand>
</feature>
<feature type="binding site" evidence="2">
    <location>
        <position position="399"/>
    </location>
    <ligand>
        <name>[4Fe-4S] cluster</name>
        <dbReference type="ChEBI" id="CHEBI:49883"/>
        <label>2</label>
    </ligand>
</feature>
<feature type="modified residue" description="N-acetylalanine" evidence="1">
    <location>
        <position position="2"/>
    </location>
</feature>
<feature type="splice variant" id="VSP_025692" description="In isoform 2." evidence="3">
    <original>CSSASAQEPTSHQGGGSGGYLEHVFRHAAQELFGIHVTEVTYRPLRNKDLQEVILEREGQVLL</original>
    <variation>YVITGPVGGAVSSPSTGCSPPGGSRRSGQAAGGAVALNAGTGLLPFLWPGLPRPLVCLSVQDT</variation>
    <location>
        <begin position="300"/>
        <end position="362"/>
    </location>
</feature>
<feature type="splice variant" id="VSP_025693" description="In isoform 2." evidence="3">
    <location>
        <begin position="363"/>
        <end position="476"/>
    </location>
</feature>
<keyword id="KW-0004">4Fe-4S</keyword>
<keyword id="KW-0007">Acetylation</keyword>
<keyword id="KW-0025">Alternative splicing</keyword>
<keyword id="KW-0408">Iron</keyword>
<keyword id="KW-0411">Iron-sulfur</keyword>
<keyword id="KW-0479">Metal-binding</keyword>
<keyword id="KW-1185">Reference proteome</keyword>
<evidence type="ECO:0000250" key="1">
    <source>
        <dbReference type="UniProtKB" id="Q9H6Q4"/>
    </source>
</evidence>
<evidence type="ECO:0000255" key="2"/>
<evidence type="ECO:0000303" key="3">
    <source ref="2"/>
</evidence>
<evidence type="ECO:0000305" key="4"/>
<dbReference type="EMBL" id="BC123768">
    <property type="protein sequence ID" value="AAI23769.1"/>
    <property type="molecule type" value="mRNA"/>
</dbReference>
<dbReference type="RefSeq" id="NP_001076880.2">
    <property type="nucleotide sequence ID" value="NM_001083411.2"/>
</dbReference>
<dbReference type="SMR" id="A4FV58"/>
<dbReference type="FunCoup" id="A4FV58">
    <property type="interactions" value="2723"/>
</dbReference>
<dbReference type="STRING" id="9913.ENSBTAP00000003225"/>
<dbReference type="PaxDb" id="9913-ENSBTAP00000003225"/>
<dbReference type="GeneID" id="511837"/>
<dbReference type="KEGG" id="bta:511837"/>
<dbReference type="CTD" id="64428"/>
<dbReference type="VEuPathDB" id="HostDB:ENSBTAG00000002484"/>
<dbReference type="eggNOG" id="KOG2439">
    <property type="taxonomic scope" value="Eukaryota"/>
</dbReference>
<dbReference type="HOGENOM" id="CLU_018240_0_0_1"/>
<dbReference type="InParanoid" id="A4FV58"/>
<dbReference type="OMA" id="GYLHHVL"/>
<dbReference type="OrthoDB" id="10253113at2759"/>
<dbReference type="TreeFam" id="TF106273"/>
<dbReference type="Proteomes" id="UP000009136">
    <property type="component" value="Chromosome 25"/>
</dbReference>
<dbReference type="Bgee" id="ENSBTAG00000002484">
    <property type="expression patterns" value="Expressed in laryngeal cartilage and 105 other cell types or tissues"/>
</dbReference>
<dbReference type="GO" id="GO:0097361">
    <property type="term" value="C:cytosolic [4Fe-4S] assembly targeting complex"/>
    <property type="evidence" value="ECO:0000250"/>
    <property type="project" value="UniProtKB"/>
</dbReference>
<dbReference type="GO" id="GO:0051539">
    <property type="term" value="F:4 iron, 4 sulfur cluster binding"/>
    <property type="evidence" value="ECO:0007669"/>
    <property type="project" value="UniProtKB-KW"/>
</dbReference>
<dbReference type="GO" id="GO:0046872">
    <property type="term" value="F:metal ion binding"/>
    <property type="evidence" value="ECO:0007669"/>
    <property type="project" value="UniProtKB-KW"/>
</dbReference>
<dbReference type="GO" id="GO:0016226">
    <property type="term" value="P:iron-sulfur cluster assembly"/>
    <property type="evidence" value="ECO:0000250"/>
    <property type="project" value="UniProtKB"/>
</dbReference>
<dbReference type="FunFam" id="3.30.70.20:FF:000042">
    <property type="entry name" value="Cytosolic Fe-S cluster assembly factor NAR1"/>
    <property type="match status" value="1"/>
</dbReference>
<dbReference type="Gene3D" id="3.40.50.1780">
    <property type="match status" value="1"/>
</dbReference>
<dbReference type="Gene3D" id="3.40.950.10">
    <property type="entry name" value="Fe-only Hydrogenase (Larger Subunit), Chain L, domain 3"/>
    <property type="match status" value="1"/>
</dbReference>
<dbReference type="InterPro" id="IPR050340">
    <property type="entry name" value="Cytosolic_Fe-S_CAF"/>
</dbReference>
<dbReference type="InterPro" id="IPR009016">
    <property type="entry name" value="Fe_hydrogenase"/>
</dbReference>
<dbReference type="InterPro" id="IPR004108">
    <property type="entry name" value="Fe_hydrogenase_lsu_C"/>
</dbReference>
<dbReference type="InterPro" id="IPR003149">
    <property type="entry name" value="Fe_hydrogenase_ssu"/>
</dbReference>
<dbReference type="PANTHER" id="PTHR11615">
    <property type="entry name" value="NITRATE, FORMATE, IRON DEHYDROGENASE"/>
    <property type="match status" value="1"/>
</dbReference>
<dbReference type="Pfam" id="PF02906">
    <property type="entry name" value="Fe_hyd_lg_C"/>
    <property type="match status" value="1"/>
</dbReference>
<dbReference type="Pfam" id="PF02256">
    <property type="entry name" value="Fe_hyd_SSU"/>
    <property type="match status" value="1"/>
</dbReference>
<dbReference type="SMART" id="SM00902">
    <property type="entry name" value="Fe_hyd_SSU"/>
    <property type="match status" value="1"/>
</dbReference>
<dbReference type="SUPFAM" id="SSF53920">
    <property type="entry name" value="Fe-only hydrogenase"/>
    <property type="match status" value="1"/>
</dbReference>
<accession>A4FV58</accession>